<comment type="function">
    <text evidence="1">Transcriptional regulator which is important for the differentiation and maintenance of meso-diencephalic dopaminergic (mdDA) neurons during development. In addition to its importance during development, it also has roles in the long-term survival and maintenance of the mdDA neurons. Activates NR4A2/NURR1-mediated transcription of genes such as SLC6A3, SLC18A2, TH and DRD2 which are essential for development of mdDA neurons. Acts by decreasing the interaction of NR4A2/NURR1 with the corepressor NCOR2/SMRT which acts through histone deacetylases (HDACs) to keep promoters of NR4A2/NURR1 target genes in a repressed deacetylated state. Essential for the normal lens development and differentiation. Plays a critical role in the maintenance of mitotic activity of lens epithelial cells, fiber cell differentiation and in the control of the temporal and spatial activation of fiber cell-specific crystallins. Positively regulates FOXE3 expression and negatively regulates PROX1 in the anterior lens epithelium, preventing activation of CDKN1B/P27Kip1 and CDKN1C/P57Kip2 and thus maintains lens epithelial cells in cell cycle (By similarity).</text>
</comment>
<comment type="subunit">
    <text evidence="1">Interacts with SFPQ.</text>
</comment>
<comment type="subcellular location">
    <subcellularLocation>
        <location evidence="4 5">Nucleus</location>
    </subcellularLocation>
</comment>
<comment type="tissue specificity">
    <text>Highly expressed in developing eye lens.</text>
</comment>
<comment type="disease" evidence="8">
    <disease id="DI-00123">
        <name>Anterior segment dysgenesis 1</name>
        <acronym>ASGD1</acronym>
        <description>A form of anterior segment dysgenesis, a group of defects affecting anterior structures of the eye including cornea, iris, lens, trabecular meshwork, and Schlemm canal. Anterior segment dysgeneses result from abnormal migration or differentiation of the neural crest derived mesenchymal cells that give rise to components of the anterior chamber during eye development. Different anterior segment anomalies may exist alone or in combination, including iris hypoplasia, enlarged or reduced corneal diameter, corneal vascularization and opacity, posterior embryotoxon, corectopia, polycoria, abnormal iridocorneal angle, ectopia lentis, and anterior synechiae between the iris and posterior corneal surface. Clinical conditions falling within the phenotypic spectrum of anterior segment dysgeneses include aniridia, Axenfeld anomaly, Reiger anomaly/syndrome, Peters anomaly, and iridogoniodysgenesis.</description>
        <dbReference type="MIM" id="107250"/>
    </disease>
    <text>The disease is caused by variants affecting the gene represented in this entry.</text>
</comment>
<comment type="disease" evidence="7 8">
    <disease id="DI-02184">
        <name>Cataract 11, multiple types</name>
        <acronym>CTRCT11</acronym>
        <description>An opacification of the crystalline lens of the eye that frequently results in visual impairment or blindness. Opacities vary in morphology, are often confined to a portion of the lens, and may be static or progressive. CTRCT11 includes posterior polar cataract, among others. Posterior polar cataract is a subcapsular opacity, usually disk-shaped, located at the back of the lens. Some CTRCT11 patients can present a severe phenotype including microphthalmia and neurological dysfunction.</description>
        <dbReference type="MIM" id="610623"/>
    </disease>
    <text>The disease is caused by variants affecting the gene represented in this entry.</text>
</comment>
<comment type="similarity">
    <text evidence="9">Belongs to the paired homeobox family. Bicoid subfamily.</text>
</comment>
<protein>
    <recommendedName>
        <fullName>Pituitary homeobox 3</fullName>
    </recommendedName>
    <alternativeName>
        <fullName>Homeobox protein PITX3</fullName>
    </alternativeName>
    <alternativeName>
        <fullName>Paired-like homeodomain transcription factor 3</fullName>
    </alternativeName>
</protein>
<proteinExistence type="evidence at protein level"/>
<gene>
    <name type="primary">PITX3</name>
    <name type="synonym">PTX3</name>
</gene>
<reference key="1">
    <citation type="journal article" date="1998" name="Nat. Genet.">
        <title>A novel homeobox gene PITX3 is mutated in families with autosomal-dominant cataracts and ASMD.</title>
        <authorList>
            <person name="Semina E.V."/>
            <person name="Ferrell R.E."/>
            <person name="Mintz-Hittner H.A."/>
            <person name="Bitoun P."/>
            <person name="Alward W.L.M."/>
            <person name="Reiter R.S."/>
            <person name="Funkhauser C."/>
            <person name="Daack-Hirsch S."/>
            <person name="Murray J.C."/>
        </authorList>
    </citation>
    <scope>NUCLEOTIDE SEQUENCE [MRNA]</scope>
    <scope>VARIANT CTRCT11 ASN-13</scope>
    <scope>INVOLVEMENT IN ASGD1</scope>
    <source>
        <tissue>Craniofacial</tissue>
    </source>
</reference>
<reference key="2">
    <citation type="journal article" date="2004" name="Nature">
        <title>The DNA sequence and comparative analysis of human chromosome 10.</title>
        <authorList>
            <person name="Deloukas P."/>
            <person name="Earthrowl M.E."/>
            <person name="Grafham D.V."/>
            <person name="Rubenfield M."/>
            <person name="French L."/>
            <person name="Steward C.A."/>
            <person name="Sims S.K."/>
            <person name="Jones M.C."/>
            <person name="Searle S."/>
            <person name="Scott C."/>
            <person name="Howe K."/>
            <person name="Hunt S.E."/>
            <person name="Andrews T.D."/>
            <person name="Gilbert J.G.R."/>
            <person name="Swarbreck D."/>
            <person name="Ashurst J.L."/>
            <person name="Taylor A."/>
            <person name="Battles J."/>
            <person name="Bird C.P."/>
            <person name="Ainscough R."/>
            <person name="Almeida J.P."/>
            <person name="Ashwell R.I.S."/>
            <person name="Ambrose K.D."/>
            <person name="Babbage A.K."/>
            <person name="Bagguley C.L."/>
            <person name="Bailey J."/>
            <person name="Banerjee R."/>
            <person name="Bates K."/>
            <person name="Beasley H."/>
            <person name="Bray-Allen S."/>
            <person name="Brown A.J."/>
            <person name="Brown J.Y."/>
            <person name="Burford D.C."/>
            <person name="Burrill W."/>
            <person name="Burton J."/>
            <person name="Cahill P."/>
            <person name="Camire D."/>
            <person name="Carter N.P."/>
            <person name="Chapman J.C."/>
            <person name="Clark S.Y."/>
            <person name="Clarke G."/>
            <person name="Clee C.M."/>
            <person name="Clegg S."/>
            <person name="Corby N."/>
            <person name="Coulson A."/>
            <person name="Dhami P."/>
            <person name="Dutta I."/>
            <person name="Dunn M."/>
            <person name="Faulkner L."/>
            <person name="Frankish A."/>
            <person name="Frankland J.A."/>
            <person name="Garner P."/>
            <person name="Garnett J."/>
            <person name="Gribble S."/>
            <person name="Griffiths C."/>
            <person name="Grocock R."/>
            <person name="Gustafson E."/>
            <person name="Hammond S."/>
            <person name="Harley J.L."/>
            <person name="Hart E."/>
            <person name="Heath P.D."/>
            <person name="Ho T.P."/>
            <person name="Hopkins B."/>
            <person name="Horne J."/>
            <person name="Howden P.J."/>
            <person name="Huckle E."/>
            <person name="Hynds C."/>
            <person name="Johnson C."/>
            <person name="Johnson D."/>
            <person name="Kana A."/>
            <person name="Kay M."/>
            <person name="Kimberley A.M."/>
            <person name="Kershaw J.K."/>
            <person name="Kokkinaki M."/>
            <person name="Laird G.K."/>
            <person name="Lawlor S."/>
            <person name="Lee H.M."/>
            <person name="Leongamornlert D.A."/>
            <person name="Laird G."/>
            <person name="Lloyd C."/>
            <person name="Lloyd D.M."/>
            <person name="Loveland J."/>
            <person name="Lovell J."/>
            <person name="McLaren S."/>
            <person name="McLay K.E."/>
            <person name="McMurray A."/>
            <person name="Mashreghi-Mohammadi M."/>
            <person name="Matthews L."/>
            <person name="Milne S."/>
            <person name="Nickerson T."/>
            <person name="Nguyen M."/>
            <person name="Overton-Larty E."/>
            <person name="Palmer S.A."/>
            <person name="Pearce A.V."/>
            <person name="Peck A.I."/>
            <person name="Pelan S."/>
            <person name="Phillimore B."/>
            <person name="Porter K."/>
            <person name="Rice C.M."/>
            <person name="Rogosin A."/>
            <person name="Ross M.T."/>
            <person name="Sarafidou T."/>
            <person name="Sehra H.K."/>
            <person name="Shownkeen R."/>
            <person name="Skuce C.D."/>
            <person name="Smith M."/>
            <person name="Standring L."/>
            <person name="Sycamore N."/>
            <person name="Tester J."/>
            <person name="Thorpe A."/>
            <person name="Torcasso W."/>
            <person name="Tracey A."/>
            <person name="Tromans A."/>
            <person name="Tsolas J."/>
            <person name="Wall M."/>
            <person name="Walsh J."/>
            <person name="Wang H."/>
            <person name="Weinstock K."/>
            <person name="West A.P."/>
            <person name="Willey D.L."/>
            <person name="Whitehead S.L."/>
            <person name="Wilming L."/>
            <person name="Wray P.W."/>
            <person name="Young L."/>
            <person name="Chen Y."/>
            <person name="Lovering R.C."/>
            <person name="Moschonas N.K."/>
            <person name="Siebert R."/>
            <person name="Fechtel K."/>
            <person name="Bentley D."/>
            <person name="Durbin R.M."/>
            <person name="Hubbard T."/>
            <person name="Doucette-Stamm L."/>
            <person name="Beck S."/>
            <person name="Smith D.R."/>
            <person name="Rogers J."/>
        </authorList>
    </citation>
    <scope>NUCLEOTIDE SEQUENCE [LARGE SCALE GENOMIC DNA]</scope>
</reference>
<reference key="3">
    <citation type="journal article" date="2004" name="Genome Res.">
        <title>The status, quality, and expansion of the NIH full-length cDNA project: the Mammalian Gene Collection (MGC).</title>
        <authorList>
            <consortium name="The MGC Project Team"/>
        </authorList>
    </citation>
    <scope>NUCLEOTIDE SEQUENCE [LARGE SCALE MRNA]</scope>
    <source>
        <tissue>Muscle</tissue>
    </source>
</reference>
<reference key="4">
    <citation type="journal article" date="2004" name="J. Med. Genet.">
        <title>Recurrent 17 bp duplication in PITX3 is primarily associated with posterior polar cataract (CPP4).</title>
        <authorList>
            <person name="Berry V."/>
            <person name="Yang Z."/>
            <person name="Addison P.K."/>
            <person name="Francis P.J."/>
            <person name="Ionides A."/>
            <person name="Karan G."/>
            <person name="Jiang L."/>
            <person name="Lin W."/>
            <person name="Hu J."/>
            <person name="Yang R."/>
            <person name="Moore A."/>
            <person name="Zhang K."/>
            <person name="Bhattacharya S.S."/>
        </authorList>
    </citation>
    <scope>INVOLVEMENT IN CTRCT11</scope>
</reference>
<reference key="5">
    <citation type="journal article" date="2009" name="Anal. Chem.">
        <title>Lys-N and trypsin cover complementary parts of the phosphoproteome in a refined SCX-based approach.</title>
        <authorList>
            <person name="Gauci S."/>
            <person name="Helbig A.O."/>
            <person name="Slijper M."/>
            <person name="Krijgsveld J."/>
            <person name="Heck A.J."/>
            <person name="Mohammed S."/>
        </authorList>
    </citation>
    <scope>IDENTIFICATION BY MASS SPECTROMETRY [LARGE SCALE ANALYSIS]</scope>
</reference>
<evidence type="ECO:0000250" key="1"/>
<evidence type="ECO:0000250" key="2">
    <source>
        <dbReference type="UniProtKB" id="P81062"/>
    </source>
</evidence>
<evidence type="ECO:0000255" key="3"/>
<evidence type="ECO:0000255" key="4">
    <source>
        <dbReference type="PROSITE-ProRule" id="PRU00108"/>
    </source>
</evidence>
<evidence type="ECO:0000255" key="5">
    <source>
        <dbReference type="PROSITE-ProRule" id="PRU00138"/>
    </source>
</evidence>
<evidence type="ECO:0000256" key="6">
    <source>
        <dbReference type="SAM" id="MobiDB-lite"/>
    </source>
</evidence>
<evidence type="ECO:0000269" key="7">
    <source>
    </source>
</evidence>
<evidence type="ECO:0000269" key="8">
    <source>
    </source>
</evidence>
<evidence type="ECO:0000305" key="9"/>
<sequence length="302" mass="31832">MEFGLLSEAEARSPALSLSDAGTPHPQLPEHGCKGQEHSDSEKASASLPGGSPEDGSLKKKQRRQRTHFTSQQLQELEATFQRNRYPDMSTREEIAVWTNLTEARVRVWFKNRRAKWRKRERSQQAELCKGSFAAPLGGLVPPYEEVYPGYSYGNWPPKALAPPLAAKTFPFAFNSVNVGPLASQPVFSPPSSIAASMVPSAAAAPGTVPGPGALQGLGGGPPGLAPAAVSSGAVSCPYASAAAAAAAAASSPYVYRDPCNSSLASLRLKAKQHASFSYPAVHGPPPAANLSPCQYAVERPV</sequence>
<name>PITX3_HUMAN</name>
<feature type="chain" id="PRO_0000049229" description="Pituitary homeobox 3">
    <location>
        <begin position="1"/>
        <end position="302"/>
    </location>
</feature>
<feature type="DNA-binding region" description="Homeobox" evidence="4">
    <location>
        <begin position="62"/>
        <end position="121"/>
    </location>
</feature>
<feature type="region of interest" description="Disordered" evidence="6">
    <location>
        <begin position="1"/>
        <end position="71"/>
    </location>
</feature>
<feature type="short sequence motif" description="OAR" evidence="5">
    <location>
        <begin position="262"/>
        <end position="275"/>
    </location>
</feature>
<feature type="short sequence motif" description="Nuclear localization signal" evidence="3">
    <location>
        <begin position="268"/>
        <end position="272"/>
    </location>
</feature>
<feature type="compositionally biased region" description="Basic and acidic residues" evidence="6">
    <location>
        <begin position="31"/>
        <end position="43"/>
    </location>
</feature>
<feature type="modified residue" description="Phosphoserine" evidence="2">
    <location>
        <position position="52"/>
    </location>
</feature>
<feature type="modified residue" description="Phosphoserine" evidence="2">
    <location>
        <position position="57"/>
    </location>
</feature>
<feature type="sequence variant" id="VAR_003767" description="In CTRCT11; dbSNP:rs104894175." evidence="8">
    <original>S</original>
    <variation>N</variation>
    <location>
        <position position="13"/>
    </location>
</feature>
<accession>O75364</accession>
<accession>Q5VZL2</accession>
<dbReference type="EMBL" id="AF041339">
    <property type="protein sequence ID" value="AAC24502.1"/>
    <property type="molecule type" value="mRNA"/>
</dbReference>
<dbReference type="EMBL" id="AL160011">
    <property type="status" value="NOT_ANNOTATED_CDS"/>
    <property type="molecule type" value="Genomic_DNA"/>
</dbReference>
<dbReference type="EMBL" id="BC011642">
    <property type="protein sequence ID" value="AAH11642.1"/>
    <property type="molecule type" value="mRNA"/>
</dbReference>
<dbReference type="CCDS" id="CCDS7532.1"/>
<dbReference type="RefSeq" id="NP_005020.1">
    <property type="nucleotide sequence ID" value="NM_005029.4"/>
</dbReference>
<dbReference type="RefSeq" id="XP_047281308.1">
    <property type="nucleotide sequence ID" value="XM_047425352.1"/>
</dbReference>
<dbReference type="RefSeq" id="XP_054222065.1">
    <property type="nucleotide sequence ID" value="XM_054366090.1"/>
</dbReference>
<dbReference type="BMRB" id="O75364"/>
<dbReference type="SMR" id="O75364"/>
<dbReference type="BioGRID" id="111326">
    <property type="interactions" value="6"/>
</dbReference>
<dbReference type="FunCoup" id="O75364">
    <property type="interactions" value="766"/>
</dbReference>
<dbReference type="STRING" id="9606.ENSP00000359019"/>
<dbReference type="iPTMnet" id="O75364"/>
<dbReference type="PhosphoSitePlus" id="O75364"/>
<dbReference type="BioMuta" id="PITX3"/>
<dbReference type="jPOST" id="O75364"/>
<dbReference type="MassIVE" id="O75364"/>
<dbReference type="PaxDb" id="9606-ENSP00000359019"/>
<dbReference type="PeptideAtlas" id="O75364"/>
<dbReference type="ProteomicsDB" id="49928"/>
<dbReference type="Antibodypedia" id="18010">
    <property type="antibodies" value="219 antibodies from 34 providers"/>
</dbReference>
<dbReference type="DNASU" id="5309"/>
<dbReference type="Ensembl" id="ENST00000370002.8">
    <property type="protein sequence ID" value="ENSP00000359019.3"/>
    <property type="gene ID" value="ENSG00000107859.11"/>
</dbReference>
<dbReference type="GeneID" id="5309"/>
<dbReference type="KEGG" id="hsa:5309"/>
<dbReference type="MANE-Select" id="ENST00000370002.8">
    <property type="protein sequence ID" value="ENSP00000359019.3"/>
    <property type="RefSeq nucleotide sequence ID" value="NM_005029.4"/>
    <property type="RefSeq protein sequence ID" value="NP_005020.1"/>
</dbReference>
<dbReference type="UCSC" id="uc001kuu.2">
    <property type="organism name" value="human"/>
</dbReference>
<dbReference type="AGR" id="HGNC:9006"/>
<dbReference type="CTD" id="5309"/>
<dbReference type="DisGeNET" id="5309"/>
<dbReference type="GeneCards" id="PITX3"/>
<dbReference type="HGNC" id="HGNC:9006">
    <property type="gene designation" value="PITX3"/>
</dbReference>
<dbReference type="HPA" id="ENSG00000107859">
    <property type="expression patterns" value="Tissue enhanced (brain, skeletal muscle, tongue)"/>
</dbReference>
<dbReference type="MalaCards" id="PITX3"/>
<dbReference type="MIM" id="107250">
    <property type="type" value="phenotype"/>
</dbReference>
<dbReference type="MIM" id="602669">
    <property type="type" value="gene"/>
</dbReference>
<dbReference type="MIM" id="610623">
    <property type="type" value="phenotype"/>
</dbReference>
<dbReference type="neXtProt" id="NX_O75364"/>
<dbReference type="OpenTargets" id="ENSG00000107859"/>
<dbReference type="Orphanet" id="162">
    <property type="disease" value="Congenital cataract-anterior segment dysgenesis syndrome"/>
</dbReference>
<dbReference type="Orphanet" id="98993">
    <property type="disease" value="Early-onset posterior polar cataract"/>
</dbReference>
<dbReference type="PharmGKB" id="PA33340"/>
<dbReference type="VEuPathDB" id="HostDB:ENSG00000107859"/>
<dbReference type="eggNOG" id="KOG0486">
    <property type="taxonomic scope" value="Eukaryota"/>
</dbReference>
<dbReference type="GeneTree" id="ENSGT00940000161801"/>
<dbReference type="HOGENOM" id="CLU_030301_0_0_1"/>
<dbReference type="InParanoid" id="O75364"/>
<dbReference type="OMA" id="QRQRTHF"/>
<dbReference type="OrthoDB" id="6159439at2759"/>
<dbReference type="PAN-GO" id="O75364">
    <property type="GO annotations" value="5 GO annotations based on evolutionary models"/>
</dbReference>
<dbReference type="PhylomeDB" id="O75364"/>
<dbReference type="TreeFam" id="TF351940"/>
<dbReference type="PathwayCommons" id="O75364"/>
<dbReference type="SignaLink" id="O75364"/>
<dbReference type="SIGNOR" id="O75364"/>
<dbReference type="BioGRID-ORCS" id="5309">
    <property type="hits" value="13 hits in 1170 CRISPR screens"/>
</dbReference>
<dbReference type="GeneWiki" id="PITX3"/>
<dbReference type="GenomeRNAi" id="5309"/>
<dbReference type="Pharos" id="O75364">
    <property type="development level" value="Tbio"/>
</dbReference>
<dbReference type="PRO" id="PR:O75364"/>
<dbReference type="Proteomes" id="UP000005640">
    <property type="component" value="Chromosome 10"/>
</dbReference>
<dbReference type="RNAct" id="O75364">
    <property type="molecule type" value="protein"/>
</dbReference>
<dbReference type="Bgee" id="ENSG00000107859">
    <property type="expression patterns" value="Expressed in hindlimb stylopod muscle and 63 other cell types or tissues"/>
</dbReference>
<dbReference type="GO" id="GO:0000785">
    <property type="term" value="C:chromatin"/>
    <property type="evidence" value="ECO:0000247"/>
    <property type="project" value="NTNU_SB"/>
</dbReference>
<dbReference type="GO" id="GO:0005634">
    <property type="term" value="C:nucleus"/>
    <property type="evidence" value="ECO:0000250"/>
    <property type="project" value="UniProtKB"/>
</dbReference>
<dbReference type="GO" id="GO:0001228">
    <property type="term" value="F:DNA-binding transcription activator activity, RNA polymerase II-specific"/>
    <property type="evidence" value="ECO:0007669"/>
    <property type="project" value="Ensembl"/>
</dbReference>
<dbReference type="GO" id="GO:0000981">
    <property type="term" value="F:DNA-binding transcription factor activity, RNA polymerase II-specific"/>
    <property type="evidence" value="ECO:0000247"/>
    <property type="project" value="NTNU_SB"/>
</dbReference>
<dbReference type="GO" id="GO:0000978">
    <property type="term" value="F:RNA polymerase II cis-regulatory region sequence-specific DNA binding"/>
    <property type="evidence" value="ECO:0000318"/>
    <property type="project" value="GO_Central"/>
</dbReference>
<dbReference type="GO" id="GO:1990837">
    <property type="term" value="F:sequence-specific double-stranded DNA binding"/>
    <property type="evidence" value="ECO:0000314"/>
    <property type="project" value="ARUK-UCL"/>
</dbReference>
<dbReference type="GO" id="GO:0009653">
    <property type="term" value="P:anatomical structure morphogenesis"/>
    <property type="evidence" value="ECO:0000318"/>
    <property type="project" value="GO_Central"/>
</dbReference>
<dbReference type="GO" id="GO:0009887">
    <property type="term" value="P:animal organ morphogenesis"/>
    <property type="evidence" value="ECO:0000304"/>
    <property type="project" value="ProtInc"/>
</dbReference>
<dbReference type="GO" id="GO:1990792">
    <property type="term" value="P:cellular response to glial cell derived neurotrophic factor"/>
    <property type="evidence" value="ECO:0007669"/>
    <property type="project" value="Ensembl"/>
</dbReference>
<dbReference type="GO" id="GO:0071542">
    <property type="term" value="P:dopaminergic neuron differentiation"/>
    <property type="evidence" value="ECO:0000250"/>
    <property type="project" value="UniProtKB"/>
</dbReference>
<dbReference type="GO" id="GO:0002088">
    <property type="term" value="P:lens development in camera-type eye"/>
    <property type="evidence" value="ECO:0000250"/>
    <property type="project" value="UniProtKB"/>
</dbReference>
<dbReference type="GO" id="GO:0070306">
    <property type="term" value="P:lens fiber cell differentiation"/>
    <property type="evidence" value="ECO:0007669"/>
    <property type="project" value="Ensembl"/>
</dbReference>
<dbReference type="GO" id="GO:0002089">
    <property type="term" value="P:lens morphogenesis in camera-type eye"/>
    <property type="evidence" value="ECO:0000250"/>
    <property type="project" value="UniProtKB"/>
</dbReference>
<dbReference type="GO" id="GO:0007626">
    <property type="term" value="P:locomotory behavior"/>
    <property type="evidence" value="ECO:0007669"/>
    <property type="project" value="Ensembl"/>
</dbReference>
<dbReference type="GO" id="GO:0030901">
    <property type="term" value="P:midbrain development"/>
    <property type="evidence" value="ECO:0000250"/>
    <property type="project" value="UniProtKB"/>
</dbReference>
<dbReference type="GO" id="GO:0014014">
    <property type="term" value="P:negative regulation of gliogenesis"/>
    <property type="evidence" value="ECO:0007669"/>
    <property type="project" value="Ensembl"/>
</dbReference>
<dbReference type="GO" id="GO:0048666">
    <property type="term" value="P:neuron development"/>
    <property type="evidence" value="ECO:0007669"/>
    <property type="project" value="Ensembl"/>
</dbReference>
<dbReference type="GO" id="GO:1904935">
    <property type="term" value="P:positive regulation of cell proliferation in midbrain"/>
    <property type="evidence" value="ECO:0007669"/>
    <property type="project" value="Ensembl"/>
</dbReference>
<dbReference type="GO" id="GO:0045893">
    <property type="term" value="P:positive regulation of DNA-templated transcription"/>
    <property type="evidence" value="ECO:0000250"/>
    <property type="project" value="UniProtKB"/>
</dbReference>
<dbReference type="GO" id="GO:0043525">
    <property type="term" value="P:positive regulation of neuron apoptotic process"/>
    <property type="evidence" value="ECO:0007669"/>
    <property type="project" value="Ensembl"/>
</dbReference>
<dbReference type="GO" id="GO:0006355">
    <property type="term" value="P:regulation of DNA-templated transcription"/>
    <property type="evidence" value="ECO:0000250"/>
    <property type="project" value="UniProtKB"/>
</dbReference>
<dbReference type="GO" id="GO:0006357">
    <property type="term" value="P:regulation of transcription by RNA polymerase II"/>
    <property type="evidence" value="ECO:0000318"/>
    <property type="project" value="GO_Central"/>
</dbReference>
<dbReference type="GO" id="GO:0042220">
    <property type="term" value="P:response to cocaine"/>
    <property type="evidence" value="ECO:0007669"/>
    <property type="project" value="Ensembl"/>
</dbReference>
<dbReference type="GO" id="GO:0035902">
    <property type="term" value="P:response to immobilization stress"/>
    <property type="evidence" value="ECO:0007669"/>
    <property type="project" value="Ensembl"/>
</dbReference>
<dbReference type="GO" id="GO:1904313">
    <property type="term" value="P:response to methamphetamine hydrochloride"/>
    <property type="evidence" value="ECO:0007669"/>
    <property type="project" value="Ensembl"/>
</dbReference>
<dbReference type="CDD" id="cd00086">
    <property type="entry name" value="homeodomain"/>
    <property type="match status" value="1"/>
</dbReference>
<dbReference type="FunFam" id="1.10.10.60:FF:000031">
    <property type="entry name" value="Homeobox protein"/>
    <property type="match status" value="1"/>
</dbReference>
<dbReference type="Gene3D" id="1.10.10.60">
    <property type="entry name" value="Homeodomain-like"/>
    <property type="match status" value="1"/>
</dbReference>
<dbReference type="InterPro" id="IPR001356">
    <property type="entry name" value="HD"/>
</dbReference>
<dbReference type="InterPro" id="IPR017970">
    <property type="entry name" value="Homeobox_CS"/>
</dbReference>
<dbReference type="InterPro" id="IPR016233">
    <property type="entry name" value="Homeobox_Pitx/unc30"/>
</dbReference>
<dbReference type="InterPro" id="IPR009057">
    <property type="entry name" value="Homeodomain-like_sf"/>
</dbReference>
<dbReference type="InterPro" id="IPR003654">
    <property type="entry name" value="OAR_dom"/>
</dbReference>
<dbReference type="PANTHER" id="PTHR45882:SF2">
    <property type="entry name" value="PITUITARY HOMEOBOX 3"/>
    <property type="match status" value="1"/>
</dbReference>
<dbReference type="PANTHER" id="PTHR45882">
    <property type="entry name" value="PITUITARY HOMEOBOX HOMOLOG PTX1"/>
    <property type="match status" value="1"/>
</dbReference>
<dbReference type="Pfam" id="PF00046">
    <property type="entry name" value="Homeodomain"/>
    <property type="match status" value="1"/>
</dbReference>
<dbReference type="Pfam" id="PF03826">
    <property type="entry name" value="OAR"/>
    <property type="match status" value="1"/>
</dbReference>
<dbReference type="PIRSF" id="PIRSF000563">
    <property type="entry name" value="Homeobox_protein_Pitx/Unc30"/>
    <property type="match status" value="1"/>
</dbReference>
<dbReference type="SMART" id="SM00389">
    <property type="entry name" value="HOX"/>
    <property type="match status" value="1"/>
</dbReference>
<dbReference type="SUPFAM" id="SSF46689">
    <property type="entry name" value="Homeodomain-like"/>
    <property type="match status" value="1"/>
</dbReference>
<dbReference type="PROSITE" id="PS00027">
    <property type="entry name" value="HOMEOBOX_1"/>
    <property type="match status" value="1"/>
</dbReference>
<dbReference type="PROSITE" id="PS50071">
    <property type="entry name" value="HOMEOBOX_2"/>
    <property type="match status" value="1"/>
</dbReference>
<dbReference type="PROSITE" id="PS50803">
    <property type="entry name" value="OAR"/>
    <property type="match status" value="1"/>
</dbReference>
<keyword id="KW-0010">Activator</keyword>
<keyword id="KW-0898">Cataract</keyword>
<keyword id="KW-0217">Developmental protein</keyword>
<keyword id="KW-0225">Disease variant</keyword>
<keyword id="KW-0238">DNA-binding</keyword>
<keyword id="KW-0371">Homeobox</keyword>
<keyword id="KW-0539">Nucleus</keyword>
<keyword id="KW-0597">Phosphoprotein</keyword>
<keyword id="KW-1267">Proteomics identification</keyword>
<keyword id="KW-1185">Reference proteome</keyword>
<keyword id="KW-0804">Transcription</keyword>
<keyword id="KW-0805">Transcription regulation</keyword>
<organism>
    <name type="scientific">Homo sapiens</name>
    <name type="common">Human</name>
    <dbReference type="NCBI Taxonomy" id="9606"/>
    <lineage>
        <taxon>Eukaryota</taxon>
        <taxon>Metazoa</taxon>
        <taxon>Chordata</taxon>
        <taxon>Craniata</taxon>
        <taxon>Vertebrata</taxon>
        <taxon>Euteleostomi</taxon>
        <taxon>Mammalia</taxon>
        <taxon>Eutheria</taxon>
        <taxon>Euarchontoglires</taxon>
        <taxon>Primates</taxon>
        <taxon>Haplorrhini</taxon>
        <taxon>Catarrhini</taxon>
        <taxon>Hominidae</taxon>
        <taxon>Homo</taxon>
    </lineage>
</organism>